<gene>
    <name evidence="1" type="primary">rpsG</name>
    <name type="ordered locus">AYWB_458</name>
</gene>
<name>RS7_AYWBP</name>
<dbReference type="EMBL" id="CP000061">
    <property type="protein sequence ID" value="ABC65575.1"/>
    <property type="molecule type" value="Genomic_DNA"/>
</dbReference>
<dbReference type="RefSeq" id="WP_011412739.1">
    <property type="nucleotide sequence ID" value="NC_007716.1"/>
</dbReference>
<dbReference type="SMR" id="Q2NJ18"/>
<dbReference type="STRING" id="322098.AYWB_458"/>
<dbReference type="KEGG" id="ayw:AYWB_458"/>
<dbReference type="eggNOG" id="COG0049">
    <property type="taxonomic scope" value="Bacteria"/>
</dbReference>
<dbReference type="HOGENOM" id="CLU_072226_1_1_14"/>
<dbReference type="OrthoDB" id="9807653at2"/>
<dbReference type="PhylomeDB" id="Q2NJ18"/>
<dbReference type="Proteomes" id="UP000001934">
    <property type="component" value="Chromosome"/>
</dbReference>
<dbReference type="GO" id="GO:0015935">
    <property type="term" value="C:small ribosomal subunit"/>
    <property type="evidence" value="ECO:0007669"/>
    <property type="project" value="InterPro"/>
</dbReference>
<dbReference type="GO" id="GO:0019843">
    <property type="term" value="F:rRNA binding"/>
    <property type="evidence" value="ECO:0007669"/>
    <property type="project" value="UniProtKB-UniRule"/>
</dbReference>
<dbReference type="GO" id="GO:0003735">
    <property type="term" value="F:structural constituent of ribosome"/>
    <property type="evidence" value="ECO:0007669"/>
    <property type="project" value="InterPro"/>
</dbReference>
<dbReference type="GO" id="GO:0000049">
    <property type="term" value="F:tRNA binding"/>
    <property type="evidence" value="ECO:0007669"/>
    <property type="project" value="UniProtKB-UniRule"/>
</dbReference>
<dbReference type="GO" id="GO:0006412">
    <property type="term" value="P:translation"/>
    <property type="evidence" value="ECO:0007669"/>
    <property type="project" value="UniProtKB-UniRule"/>
</dbReference>
<dbReference type="CDD" id="cd14869">
    <property type="entry name" value="uS7_Bacteria"/>
    <property type="match status" value="1"/>
</dbReference>
<dbReference type="FunFam" id="1.10.455.10:FF:000001">
    <property type="entry name" value="30S ribosomal protein S7"/>
    <property type="match status" value="1"/>
</dbReference>
<dbReference type="Gene3D" id="1.10.455.10">
    <property type="entry name" value="Ribosomal protein S7 domain"/>
    <property type="match status" value="1"/>
</dbReference>
<dbReference type="HAMAP" id="MF_00480_B">
    <property type="entry name" value="Ribosomal_uS7_B"/>
    <property type="match status" value="1"/>
</dbReference>
<dbReference type="InterPro" id="IPR000235">
    <property type="entry name" value="Ribosomal_uS7"/>
</dbReference>
<dbReference type="InterPro" id="IPR005717">
    <property type="entry name" value="Ribosomal_uS7_bac/org-type"/>
</dbReference>
<dbReference type="InterPro" id="IPR020606">
    <property type="entry name" value="Ribosomal_uS7_CS"/>
</dbReference>
<dbReference type="InterPro" id="IPR023798">
    <property type="entry name" value="Ribosomal_uS7_dom"/>
</dbReference>
<dbReference type="InterPro" id="IPR036823">
    <property type="entry name" value="Ribosomal_uS7_dom_sf"/>
</dbReference>
<dbReference type="NCBIfam" id="TIGR01029">
    <property type="entry name" value="rpsG_bact"/>
    <property type="match status" value="1"/>
</dbReference>
<dbReference type="PANTHER" id="PTHR11205">
    <property type="entry name" value="RIBOSOMAL PROTEIN S7"/>
    <property type="match status" value="1"/>
</dbReference>
<dbReference type="Pfam" id="PF00177">
    <property type="entry name" value="Ribosomal_S7"/>
    <property type="match status" value="1"/>
</dbReference>
<dbReference type="PIRSF" id="PIRSF002122">
    <property type="entry name" value="RPS7p_RPS7a_RPS5e_RPS7o"/>
    <property type="match status" value="1"/>
</dbReference>
<dbReference type="SUPFAM" id="SSF47973">
    <property type="entry name" value="Ribosomal protein S7"/>
    <property type="match status" value="1"/>
</dbReference>
<dbReference type="PROSITE" id="PS00052">
    <property type="entry name" value="RIBOSOMAL_S7"/>
    <property type="match status" value="1"/>
</dbReference>
<accession>Q2NJ18</accession>
<evidence type="ECO:0000255" key="1">
    <source>
        <dbReference type="HAMAP-Rule" id="MF_00480"/>
    </source>
</evidence>
<evidence type="ECO:0000305" key="2"/>
<sequence length="156" mass="18228">MSRKGHIKKRDVQPDPIYNSKLVTKTINTIMEDGKKGKAQTIFYQALKQVKTITNRDPIEVFHEALNNIMPVLEVRTRRVGGQNYQVPSEVRPERRHSLGLRWLVKYTKERNEKTMEERLAKEIVDASLGNGVSVKKREETHRMAEANKAFAHYRW</sequence>
<comment type="function">
    <text evidence="1">One of the primary rRNA binding proteins, it binds directly to 16S rRNA where it nucleates assembly of the head domain of the 30S subunit. Is located at the subunit interface close to the decoding center, probably blocks exit of the E-site tRNA.</text>
</comment>
<comment type="subunit">
    <text evidence="1">Part of the 30S ribosomal subunit. Contacts proteins S9 and S11.</text>
</comment>
<comment type="similarity">
    <text evidence="1">Belongs to the universal ribosomal protein uS7 family.</text>
</comment>
<proteinExistence type="inferred from homology"/>
<feature type="chain" id="PRO_0000241751" description="Small ribosomal subunit protein uS7">
    <location>
        <begin position="1"/>
        <end position="156"/>
    </location>
</feature>
<organism>
    <name type="scientific">Aster yellows witches'-broom phytoplasma (strain AYWB)</name>
    <dbReference type="NCBI Taxonomy" id="322098"/>
    <lineage>
        <taxon>Bacteria</taxon>
        <taxon>Bacillati</taxon>
        <taxon>Mycoplasmatota</taxon>
        <taxon>Mollicutes</taxon>
        <taxon>Acholeplasmatales</taxon>
        <taxon>Acholeplasmataceae</taxon>
        <taxon>Candidatus Phytoplasma</taxon>
        <taxon>16SrI (Aster yellows group)</taxon>
    </lineage>
</organism>
<protein>
    <recommendedName>
        <fullName evidence="1">Small ribosomal subunit protein uS7</fullName>
    </recommendedName>
    <alternativeName>
        <fullName evidence="2">30S ribosomal protein S7</fullName>
    </alternativeName>
</protein>
<keyword id="KW-0687">Ribonucleoprotein</keyword>
<keyword id="KW-0689">Ribosomal protein</keyword>
<keyword id="KW-0694">RNA-binding</keyword>
<keyword id="KW-0699">rRNA-binding</keyword>
<keyword id="KW-0820">tRNA-binding</keyword>
<reference key="1">
    <citation type="journal article" date="2006" name="J. Bacteriol.">
        <title>Living with genome instability: the adaptation of phytoplasmas to diverse environments of their insect and plant hosts.</title>
        <authorList>
            <person name="Bai X."/>
            <person name="Zhang J."/>
            <person name="Ewing A."/>
            <person name="Miller S.A."/>
            <person name="Jancso Radek A."/>
            <person name="Shevchenko D.V."/>
            <person name="Tsukerman K."/>
            <person name="Walunas T."/>
            <person name="Lapidus A."/>
            <person name="Campbell J.W."/>
            <person name="Hogenhout S.A."/>
        </authorList>
    </citation>
    <scope>NUCLEOTIDE SEQUENCE [LARGE SCALE GENOMIC DNA]</scope>
    <source>
        <strain>AYWB</strain>
    </source>
</reference>